<organism>
    <name type="scientific">Vanderwaltozyma polyspora (strain ATCC 22028 / DSM 70294 / BCRC 21397 / CBS 2163 / NBRC 10782 / NRRL Y-8283 / UCD 57-17)</name>
    <name type="common">Kluyveromyces polysporus</name>
    <dbReference type="NCBI Taxonomy" id="436907"/>
    <lineage>
        <taxon>Eukaryota</taxon>
        <taxon>Fungi</taxon>
        <taxon>Dikarya</taxon>
        <taxon>Ascomycota</taxon>
        <taxon>Saccharomycotina</taxon>
        <taxon>Saccharomycetes</taxon>
        <taxon>Saccharomycetales</taxon>
        <taxon>Saccharomycetaceae</taxon>
        <taxon>Vanderwaltozyma</taxon>
    </lineage>
</organism>
<gene>
    <name type="primary">AIM11</name>
    <name type="ORF">Kpol_479p22</name>
</gene>
<proteinExistence type="inferred from homology"/>
<evidence type="ECO:0000255" key="1"/>
<evidence type="ECO:0000305" key="2"/>
<name>AIM11_VANPO</name>
<keyword id="KW-0472">Membrane</keyword>
<keyword id="KW-1185">Reference proteome</keyword>
<keyword id="KW-0812">Transmembrane</keyword>
<keyword id="KW-1133">Transmembrane helix</keyword>
<accession>A7TQD5</accession>
<reference key="1">
    <citation type="journal article" date="2007" name="Proc. Natl. Acad. Sci. U.S.A.">
        <title>Independent sorting-out of thousands of duplicated gene pairs in two yeast species descended from a whole-genome duplication.</title>
        <authorList>
            <person name="Scannell D.R."/>
            <person name="Frank A.C."/>
            <person name="Conant G.C."/>
            <person name="Byrne K.P."/>
            <person name="Woolfit M."/>
            <person name="Wolfe K.H."/>
        </authorList>
    </citation>
    <scope>NUCLEOTIDE SEQUENCE [LARGE SCALE GENOMIC DNA]</scope>
    <source>
        <strain>ATCC 22028 / DSM 70294 / BCRC 21397 / CBS 2163 / NBRC 10782 / NRRL Y-8283 / UCD 57-17</strain>
    </source>
</reference>
<protein>
    <recommendedName>
        <fullName>Altered inheritance of mitochondria protein 11</fullName>
    </recommendedName>
</protein>
<feature type="chain" id="PRO_0000405658" description="Altered inheritance of mitochondria protein 11">
    <location>
        <begin position="1"/>
        <end position="149"/>
    </location>
</feature>
<feature type="transmembrane region" description="Helical" evidence="1">
    <location>
        <begin position="29"/>
        <end position="48"/>
    </location>
</feature>
<feature type="transmembrane region" description="Helical" evidence="1">
    <location>
        <begin position="79"/>
        <end position="101"/>
    </location>
</feature>
<sequence length="149" mass="16962">MVDVVSEGIPVQDVEEFTEKYKNRRKQQMMRFIGSTAVTLISCRLAITRAKARHYVPNMFQLNYKPPVVTYKGETGPALVLATGITVGTLSMLVSGSCWIWDISTMKEFREIKGFSSEKVEHPRLANMPLESDSMRNVYERLELLNGKK</sequence>
<dbReference type="EMBL" id="DS480456">
    <property type="protein sequence ID" value="EDO15534.1"/>
    <property type="molecule type" value="Genomic_DNA"/>
</dbReference>
<dbReference type="RefSeq" id="XP_001643392.1">
    <property type="nucleotide sequence ID" value="XM_001643342.1"/>
</dbReference>
<dbReference type="SMR" id="A7TQD5"/>
<dbReference type="FunCoup" id="A7TQD5">
    <property type="interactions" value="32"/>
</dbReference>
<dbReference type="GeneID" id="5543604"/>
<dbReference type="KEGG" id="vpo:Kpol_479p22"/>
<dbReference type="eggNOG" id="ENOG502SAK0">
    <property type="taxonomic scope" value="Eukaryota"/>
</dbReference>
<dbReference type="HOGENOM" id="CLU_118700_0_0_1"/>
<dbReference type="InParanoid" id="A7TQD5"/>
<dbReference type="OMA" id="CWIWDIS"/>
<dbReference type="OrthoDB" id="4088121at2759"/>
<dbReference type="PhylomeDB" id="A7TQD5"/>
<dbReference type="Proteomes" id="UP000000267">
    <property type="component" value="Unassembled WGS sequence"/>
</dbReference>
<dbReference type="GO" id="GO:0016020">
    <property type="term" value="C:membrane"/>
    <property type="evidence" value="ECO:0007669"/>
    <property type="project" value="UniProtKB-SubCell"/>
</dbReference>
<dbReference type="GO" id="GO:0005739">
    <property type="term" value="C:mitochondrion"/>
    <property type="evidence" value="ECO:0007669"/>
    <property type="project" value="TreeGrafter"/>
</dbReference>
<dbReference type="InterPro" id="IPR038814">
    <property type="entry name" value="AIM11"/>
</dbReference>
<dbReference type="PANTHER" id="PTHR39136">
    <property type="entry name" value="ALTERED INHERITANCE OF MITOCHONDRIA PROTEIN 11"/>
    <property type="match status" value="1"/>
</dbReference>
<dbReference type="PANTHER" id="PTHR39136:SF1">
    <property type="entry name" value="ALTERED INHERITANCE OF MITOCHONDRIA PROTEIN 11"/>
    <property type="match status" value="1"/>
</dbReference>
<comment type="subcellular location">
    <subcellularLocation>
        <location evidence="2">Membrane</location>
        <topology evidence="2">Multi-pass membrane protein</topology>
    </subcellularLocation>
</comment>
<comment type="similarity">
    <text evidence="2">Belongs to the AIM11 family.</text>
</comment>